<organism>
    <name type="scientific">Burkholderia pseudomallei (strain 1710b)</name>
    <dbReference type="NCBI Taxonomy" id="320372"/>
    <lineage>
        <taxon>Bacteria</taxon>
        <taxon>Pseudomonadati</taxon>
        <taxon>Pseudomonadota</taxon>
        <taxon>Betaproteobacteria</taxon>
        <taxon>Burkholderiales</taxon>
        <taxon>Burkholderiaceae</taxon>
        <taxon>Burkholderia</taxon>
        <taxon>pseudomallei group</taxon>
    </lineage>
</organism>
<evidence type="ECO:0000255" key="1">
    <source>
        <dbReference type="PROSITE-ProRule" id="PRU00520"/>
    </source>
</evidence>
<evidence type="ECO:0000305" key="2"/>
<gene>
    <name type="primary">acyP</name>
    <name type="ordered locus">BURPS1710b_A1279</name>
</gene>
<comment type="catalytic activity">
    <reaction>
        <text>an acyl phosphate + H2O = a carboxylate + phosphate + H(+)</text>
        <dbReference type="Rhea" id="RHEA:14965"/>
        <dbReference type="ChEBI" id="CHEBI:15377"/>
        <dbReference type="ChEBI" id="CHEBI:15378"/>
        <dbReference type="ChEBI" id="CHEBI:29067"/>
        <dbReference type="ChEBI" id="CHEBI:43474"/>
        <dbReference type="ChEBI" id="CHEBI:59918"/>
        <dbReference type="EC" id="3.6.1.7"/>
    </reaction>
</comment>
<comment type="similarity">
    <text evidence="2">Belongs to the acylphosphatase family.</text>
</comment>
<comment type="sequence caution" evidence="2">
    <conflict type="erroneous initiation">
        <sequence resource="EMBL-CDS" id="ABA52674"/>
    </conflict>
</comment>
<accession>Q3JJ17</accession>
<feature type="chain" id="PRO_0000326673" description="Acylphosphatase">
    <location>
        <begin position="1"/>
        <end position="98"/>
    </location>
</feature>
<feature type="domain" description="Acylphosphatase-like" evidence="1">
    <location>
        <begin position="12"/>
        <end position="98"/>
    </location>
</feature>
<feature type="active site" evidence="1">
    <location>
        <position position="27"/>
    </location>
</feature>
<feature type="active site" evidence="1">
    <location>
        <position position="45"/>
    </location>
</feature>
<name>ACYP_BURP1</name>
<sequence length="98" mass="11254">MSGDDLDERIETYYVRVRGVVQGVGFRHATVREAHALKLRGWVANLDDGSVEAMLQGSAPQIDRMLAWLRHGPPAAHVTEVTFEEHRTDKRFERFQQH</sequence>
<keyword id="KW-0378">Hydrolase</keyword>
<dbReference type="EC" id="3.6.1.7"/>
<dbReference type="EMBL" id="CP000125">
    <property type="protein sequence ID" value="ABA52674.1"/>
    <property type="status" value="ALT_INIT"/>
    <property type="molecule type" value="Genomic_DNA"/>
</dbReference>
<dbReference type="RefSeq" id="WP_004187760.1">
    <property type="nucleotide sequence ID" value="NC_007435.1"/>
</dbReference>
<dbReference type="SMR" id="Q3JJ17"/>
<dbReference type="EnsemblBacteria" id="ABA52674">
    <property type="protein sequence ID" value="ABA52674"/>
    <property type="gene ID" value="BURPS1710b_A1279"/>
</dbReference>
<dbReference type="KEGG" id="bpm:BURPS1710b_A1279"/>
<dbReference type="HOGENOM" id="CLU_1746217_0_0_4"/>
<dbReference type="Proteomes" id="UP000002700">
    <property type="component" value="Chromosome II"/>
</dbReference>
<dbReference type="GO" id="GO:0003998">
    <property type="term" value="F:acylphosphatase activity"/>
    <property type="evidence" value="ECO:0007669"/>
    <property type="project" value="UniProtKB-EC"/>
</dbReference>
<dbReference type="Gene3D" id="3.30.70.100">
    <property type="match status" value="1"/>
</dbReference>
<dbReference type="InterPro" id="IPR020456">
    <property type="entry name" value="Acylphosphatase"/>
</dbReference>
<dbReference type="InterPro" id="IPR001792">
    <property type="entry name" value="Acylphosphatase-like_dom"/>
</dbReference>
<dbReference type="InterPro" id="IPR036046">
    <property type="entry name" value="Acylphosphatase-like_dom_sf"/>
</dbReference>
<dbReference type="InterPro" id="IPR017968">
    <property type="entry name" value="Acylphosphatase_CS"/>
</dbReference>
<dbReference type="NCBIfam" id="NF010998">
    <property type="entry name" value="PRK14424.1"/>
    <property type="match status" value="1"/>
</dbReference>
<dbReference type="PANTHER" id="PTHR47268">
    <property type="entry name" value="ACYLPHOSPHATASE"/>
    <property type="match status" value="1"/>
</dbReference>
<dbReference type="PANTHER" id="PTHR47268:SF4">
    <property type="entry name" value="ACYLPHOSPHATASE"/>
    <property type="match status" value="1"/>
</dbReference>
<dbReference type="Pfam" id="PF00708">
    <property type="entry name" value="Acylphosphatase"/>
    <property type="match status" value="1"/>
</dbReference>
<dbReference type="PRINTS" id="PR00112">
    <property type="entry name" value="ACYLPHPHTASE"/>
</dbReference>
<dbReference type="SUPFAM" id="SSF54975">
    <property type="entry name" value="Acylphosphatase/BLUF domain-like"/>
    <property type="match status" value="1"/>
</dbReference>
<dbReference type="PROSITE" id="PS00150">
    <property type="entry name" value="ACYLPHOSPHATASE_1"/>
    <property type="match status" value="1"/>
</dbReference>
<dbReference type="PROSITE" id="PS00151">
    <property type="entry name" value="ACYLPHOSPHATASE_2"/>
    <property type="match status" value="1"/>
</dbReference>
<dbReference type="PROSITE" id="PS51160">
    <property type="entry name" value="ACYLPHOSPHATASE_3"/>
    <property type="match status" value="1"/>
</dbReference>
<proteinExistence type="inferred from homology"/>
<reference key="1">
    <citation type="journal article" date="2010" name="Genome Biol. Evol.">
        <title>Continuing evolution of Burkholderia mallei through genome reduction and large-scale rearrangements.</title>
        <authorList>
            <person name="Losada L."/>
            <person name="Ronning C.M."/>
            <person name="DeShazer D."/>
            <person name="Woods D."/>
            <person name="Fedorova N."/>
            <person name="Kim H.S."/>
            <person name="Shabalina S.A."/>
            <person name="Pearson T.R."/>
            <person name="Brinkac L."/>
            <person name="Tan P."/>
            <person name="Nandi T."/>
            <person name="Crabtree J."/>
            <person name="Badger J."/>
            <person name="Beckstrom-Sternberg S."/>
            <person name="Saqib M."/>
            <person name="Schutzer S.E."/>
            <person name="Keim P."/>
            <person name="Nierman W.C."/>
        </authorList>
    </citation>
    <scope>NUCLEOTIDE SEQUENCE [LARGE SCALE GENOMIC DNA]</scope>
    <source>
        <strain>1710b</strain>
    </source>
</reference>
<protein>
    <recommendedName>
        <fullName>Acylphosphatase</fullName>
        <ecNumber>3.6.1.7</ecNumber>
    </recommendedName>
    <alternativeName>
        <fullName>Acylphosphate phosphohydrolase</fullName>
    </alternativeName>
</protein>